<dbReference type="EC" id="3.6.4.-" evidence="1"/>
<dbReference type="EMBL" id="AE017244">
    <property type="protein sequence ID" value="AAZ53775.2"/>
    <property type="molecule type" value="Genomic_DNA"/>
</dbReference>
<dbReference type="RefSeq" id="WP_011206256.1">
    <property type="nucleotide sequence ID" value="NC_007332.1"/>
</dbReference>
<dbReference type="SMR" id="Q4A7W4"/>
<dbReference type="GeneID" id="41334720"/>
<dbReference type="KEGG" id="mhp:MHP7448_0406"/>
<dbReference type="HOGENOM" id="CLU_055599_1_0_14"/>
<dbReference type="Proteomes" id="UP000000553">
    <property type="component" value="Chromosome"/>
</dbReference>
<dbReference type="GO" id="GO:0005737">
    <property type="term" value="C:cytoplasm"/>
    <property type="evidence" value="ECO:0007669"/>
    <property type="project" value="UniProtKB-SubCell"/>
</dbReference>
<dbReference type="GO" id="GO:0048476">
    <property type="term" value="C:Holliday junction resolvase complex"/>
    <property type="evidence" value="ECO:0007669"/>
    <property type="project" value="UniProtKB-UniRule"/>
</dbReference>
<dbReference type="GO" id="GO:0005524">
    <property type="term" value="F:ATP binding"/>
    <property type="evidence" value="ECO:0007669"/>
    <property type="project" value="UniProtKB-UniRule"/>
</dbReference>
<dbReference type="GO" id="GO:0016887">
    <property type="term" value="F:ATP hydrolysis activity"/>
    <property type="evidence" value="ECO:0007669"/>
    <property type="project" value="InterPro"/>
</dbReference>
<dbReference type="GO" id="GO:0000400">
    <property type="term" value="F:four-way junction DNA binding"/>
    <property type="evidence" value="ECO:0007669"/>
    <property type="project" value="UniProtKB-UniRule"/>
</dbReference>
<dbReference type="GO" id="GO:0009378">
    <property type="term" value="F:four-way junction helicase activity"/>
    <property type="evidence" value="ECO:0007669"/>
    <property type="project" value="InterPro"/>
</dbReference>
<dbReference type="GO" id="GO:0006310">
    <property type="term" value="P:DNA recombination"/>
    <property type="evidence" value="ECO:0007669"/>
    <property type="project" value="UniProtKB-UniRule"/>
</dbReference>
<dbReference type="GO" id="GO:0006281">
    <property type="term" value="P:DNA repair"/>
    <property type="evidence" value="ECO:0007669"/>
    <property type="project" value="UniProtKB-UniRule"/>
</dbReference>
<dbReference type="CDD" id="cd00009">
    <property type="entry name" value="AAA"/>
    <property type="match status" value="1"/>
</dbReference>
<dbReference type="Gene3D" id="1.10.8.60">
    <property type="match status" value="1"/>
</dbReference>
<dbReference type="Gene3D" id="3.40.50.300">
    <property type="entry name" value="P-loop containing nucleotide triphosphate hydrolases"/>
    <property type="match status" value="1"/>
</dbReference>
<dbReference type="Gene3D" id="1.10.10.10">
    <property type="entry name" value="Winged helix-like DNA-binding domain superfamily/Winged helix DNA-binding domain"/>
    <property type="match status" value="1"/>
</dbReference>
<dbReference type="HAMAP" id="MF_00016">
    <property type="entry name" value="DNA_HJ_migration_RuvB"/>
    <property type="match status" value="1"/>
</dbReference>
<dbReference type="InterPro" id="IPR003593">
    <property type="entry name" value="AAA+_ATPase"/>
</dbReference>
<dbReference type="InterPro" id="IPR041445">
    <property type="entry name" value="AAA_lid_4"/>
</dbReference>
<dbReference type="InterPro" id="IPR000641">
    <property type="entry name" value="CbxX/CfxQ"/>
</dbReference>
<dbReference type="InterPro" id="IPR004605">
    <property type="entry name" value="DNA_helicase_Holl-junc_RuvB"/>
</dbReference>
<dbReference type="InterPro" id="IPR027417">
    <property type="entry name" value="P-loop_NTPase"/>
</dbReference>
<dbReference type="InterPro" id="IPR008824">
    <property type="entry name" value="RuvB-like_N"/>
</dbReference>
<dbReference type="InterPro" id="IPR008823">
    <property type="entry name" value="RuvB_C"/>
</dbReference>
<dbReference type="InterPro" id="IPR036388">
    <property type="entry name" value="WH-like_DNA-bd_sf"/>
</dbReference>
<dbReference type="InterPro" id="IPR036390">
    <property type="entry name" value="WH_DNA-bd_sf"/>
</dbReference>
<dbReference type="NCBIfam" id="NF000868">
    <property type="entry name" value="PRK00080.1"/>
    <property type="match status" value="1"/>
</dbReference>
<dbReference type="NCBIfam" id="TIGR00635">
    <property type="entry name" value="ruvB"/>
    <property type="match status" value="1"/>
</dbReference>
<dbReference type="PANTHER" id="PTHR42848">
    <property type="match status" value="1"/>
</dbReference>
<dbReference type="PANTHER" id="PTHR42848:SF1">
    <property type="entry name" value="HOLLIDAY JUNCTION BRANCH MIGRATION COMPLEX SUBUNIT RUVB"/>
    <property type="match status" value="1"/>
</dbReference>
<dbReference type="Pfam" id="PF17864">
    <property type="entry name" value="AAA_lid_4"/>
    <property type="match status" value="1"/>
</dbReference>
<dbReference type="Pfam" id="PF05491">
    <property type="entry name" value="RuvB_C"/>
    <property type="match status" value="1"/>
</dbReference>
<dbReference type="Pfam" id="PF05496">
    <property type="entry name" value="RuvB_N"/>
    <property type="match status" value="1"/>
</dbReference>
<dbReference type="PRINTS" id="PR00819">
    <property type="entry name" value="CBXCFQXSUPER"/>
</dbReference>
<dbReference type="SMART" id="SM00382">
    <property type="entry name" value="AAA"/>
    <property type="match status" value="1"/>
</dbReference>
<dbReference type="SUPFAM" id="SSF52540">
    <property type="entry name" value="P-loop containing nucleoside triphosphate hydrolases"/>
    <property type="match status" value="1"/>
</dbReference>
<dbReference type="SUPFAM" id="SSF46785">
    <property type="entry name" value="Winged helix' DNA-binding domain"/>
    <property type="match status" value="1"/>
</dbReference>
<reference key="1">
    <citation type="journal article" date="2005" name="J. Bacteriol.">
        <title>Swine and poultry pathogens: the complete genome sequences of two strains of Mycoplasma hyopneumoniae and a strain of Mycoplasma synoviae.</title>
        <authorList>
            <person name="Vasconcelos A.T.R."/>
            <person name="Ferreira H.B."/>
            <person name="Bizarro C.V."/>
            <person name="Bonatto S.L."/>
            <person name="Carvalho M.O."/>
            <person name="Pinto P.M."/>
            <person name="Almeida D.F."/>
            <person name="Almeida L.G.P."/>
            <person name="Almeida R."/>
            <person name="Alves-Junior L."/>
            <person name="Assuncao E.N."/>
            <person name="Azevedo V.A.C."/>
            <person name="Bogo M.R."/>
            <person name="Brigido M.M."/>
            <person name="Brocchi M."/>
            <person name="Burity H.A."/>
            <person name="Camargo A.A."/>
            <person name="Camargo S.S."/>
            <person name="Carepo M.S."/>
            <person name="Carraro D.M."/>
            <person name="de Mattos Cascardo J.C."/>
            <person name="Castro L.A."/>
            <person name="Cavalcanti G."/>
            <person name="Chemale G."/>
            <person name="Collevatti R.G."/>
            <person name="Cunha C.W."/>
            <person name="Dallagiovanna B."/>
            <person name="Dambros B.P."/>
            <person name="Dellagostin O.A."/>
            <person name="Falcao C."/>
            <person name="Fantinatti-Garboggini F."/>
            <person name="Felipe M.S.S."/>
            <person name="Fiorentin L."/>
            <person name="Franco G.R."/>
            <person name="Freitas N.S.A."/>
            <person name="Frias D."/>
            <person name="Grangeiro T.B."/>
            <person name="Grisard E.C."/>
            <person name="Guimaraes C.T."/>
            <person name="Hungria M."/>
            <person name="Jardim S.N."/>
            <person name="Krieger M.A."/>
            <person name="Laurino J.P."/>
            <person name="Lima L.F.A."/>
            <person name="Lopes M.I."/>
            <person name="Loreto E.L.S."/>
            <person name="Madeira H.M.F."/>
            <person name="Manfio G.P."/>
            <person name="Maranhao A.Q."/>
            <person name="Martinkovics C.T."/>
            <person name="Medeiros S.R.B."/>
            <person name="Moreira M.A.M."/>
            <person name="Neiva M."/>
            <person name="Ramalho-Neto C.E."/>
            <person name="Nicolas M.F."/>
            <person name="Oliveira S.C."/>
            <person name="Paixao R.F.C."/>
            <person name="Pedrosa F.O."/>
            <person name="Pena S.D.J."/>
            <person name="Pereira M."/>
            <person name="Pereira-Ferrari L."/>
            <person name="Piffer I."/>
            <person name="Pinto L.S."/>
            <person name="Potrich D.P."/>
            <person name="Salim A.C.M."/>
            <person name="Santos F.R."/>
            <person name="Schmitt R."/>
            <person name="Schneider M.P.C."/>
            <person name="Schrank A."/>
            <person name="Schrank I.S."/>
            <person name="Schuck A.F."/>
            <person name="Seuanez H.N."/>
            <person name="Silva D.W."/>
            <person name="Silva R."/>
            <person name="Silva S.C."/>
            <person name="Soares C.M.A."/>
            <person name="Souza K.R.L."/>
            <person name="Souza R.C."/>
            <person name="Staats C.C."/>
            <person name="Steffens M.B.R."/>
            <person name="Teixeira S.M.R."/>
            <person name="Urmenyi T.P."/>
            <person name="Vainstein M.H."/>
            <person name="Zuccherato L.W."/>
            <person name="Simpson A.J.G."/>
            <person name="Zaha A."/>
        </authorList>
    </citation>
    <scope>NUCLEOTIDE SEQUENCE [LARGE SCALE GENOMIC DNA]</scope>
    <source>
        <strain>7448</strain>
    </source>
</reference>
<comment type="function">
    <text evidence="1">The RuvA-RuvB-RuvC complex processes Holliday junction (HJ) DNA during genetic recombination and DNA repair, while the RuvA-RuvB complex plays an important role in the rescue of blocked DNA replication forks via replication fork reversal (RFR). RuvA specifically binds to HJ cruciform DNA, conferring on it an open structure. The RuvB hexamer acts as an ATP-dependent pump, pulling dsDNA into and through the RuvAB complex. RuvB forms 2 homohexamers on either side of HJ DNA bound by 1 or 2 RuvA tetramers; 4 subunits per hexamer contact DNA at a time. Coordinated motions by a converter formed by DNA-disengaged RuvB subunits stimulates ATP hydrolysis and nucleotide exchange. Immobilization of the converter enables RuvB to convert the ATP-contained energy into a lever motion, pulling 2 nucleotides of DNA out of the RuvA tetramer per ATP hydrolyzed, thus driving DNA branch migration. The RuvB motors rotate together with the DNA substrate, which together with the progressing nucleotide cycle form the mechanistic basis for DNA recombination by continuous HJ branch migration. Branch migration allows RuvC to scan DNA until it finds its consensus sequence, where it cleaves and resolves cruciform DNA.</text>
</comment>
<comment type="catalytic activity">
    <reaction evidence="1">
        <text>ATP + H2O = ADP + phosphate + H(+)</text>
        <dbReference type="Rhea" id="RHEA:13065"/>
        <dbReference type="ChEBI" id="CHEBI:15377"/>
        <dbReference type="ChEBI" id="CHEBI:15378"/>
        <dbReference type="ChEBI" id="CHEBI:30616"/>
        <dbReference type="ChEBI" id="CHEBI:43474"/>
        <dbReference type="ChEBI" id="CHEBI:456216"/>
    </reaction>
</comment>
<comment type="subunit">
    <text evidence="1">Homohexamer. Forms an RuvA(8)-RuvB(12)-Holliday junction (HJ) complex. HJ DNA is sandwiched between 2 RuvA tetramers; dsDNA enters through RuvA and exits via RuvB. An RuvB hexamer assembles on each DNA strand where it exits the tetramer. Each RuvB hexamer is contacted by two RuvA subunits (via domain III) on 2 adjacent RuvB subunits; this complex drives branch migration. In the full resolvosome a probable DNA-RuvA(4)-RuvB(12)-RuvC(2) complex forms which resolves the HJ.</text>
</comment>
<comment type="subcellular location">
    <subcellularLocation>
        <location evidence="1">Cytoplasm</location>
    </subcellularLocation>
</comment>
<comment type="domain">
    <text evidence="1">Has 3 domains, the large (RuvB-L) and small ATPase (RuvB-S) domains and the C-terminal head (RuvB-H) domain. The head domain binds DNA, while the ATPase domains jointly bind ATP, ADP or are empty depending on the state of the subunit in the translocation cycle. During a single DNA translocation step the structure of each domain remains the same, but their relative positions change.</text>
</comment>
<comment type="similarity">
    <text evidence="1">Belongs to the RuvB family.</text>
</comment>
<protein>
    <recommendedName>
        <fullName evidence="1">Holliday junction branch migration complex subunit RuvB</fullName>
        <ecNumber evidence="1">3.6.4.-</ecNumber>
    </recommendedName>
</protein>
<sequence>MPENLEIRPSSFENFIGQKKLVETLQILISSSQKRKQSLDHILFYGPPGTGKTTLANIVANVLEAKIKYVQGPLLEKKSDVLAVLANISPDTIIFIDEIHGINKNIEELLYSAMEEFVIDLQIGVDGERKIMRMKLPQFTLIGASTKLAQISTPLQNRFGYVAKIVDYTLEDMIQIIRNSSAVLKLKMNTEIIKYIASFSNNTPRIANNLLKRIRDFALVLNAKRIDKDIVNKTFDSIGIYNQGLSQINIEYLNLLVKIFKGKSVALDVIANVLKEHRQTIINIIEPPLIEKELIEKTSRGRRITKKGRDYLLELKTN</sequence>
<gene>
    <name evidence="1" type="primary">ruvB</name>
    <name type="ordered locus">MHP7448_0406</name>
</gene>
<evidence type="ECO:0000255" key="1">
    <source>
        <dbReference type="HAMAP-Rule" id="MF_00016"/>
    </source>
</evidence>
<proteinExistence type="inferred from homology"/>
<name>RUVB_MESH7</name>
<accession>Q4A7W4</accession>
<organism>
    <name type="scientific">Mesomycoplasma hyopneumoniae (strain 7448)</name>
    <name type="common">Mycoplasma hyopneumoniae</name>
    <dbReference type="NCBI Taxonomy" id="262722"/>
    <lineage>
        <taxon>Bacteria</taxon>
        <taxon>Bacillati</taxon>
        <taxon>Mycoplasmatota</taxon>
        <taxon>Mycoplasmoidales</taxon>
        <taxon>Metamycoplasmataceae</taxon>
        <taxon>Mesomycoplasma</taxon>
    </lineage>
</organism>
<feature type="chain" id="PRO_0000235379" description="Holliday junction branch migration complex subunit RuvB">
    <location>
        <begin position="1"/>
        <end position="318"/>
    </location>
</feature>
<feature type="region of interest" description="Large ATPase domain (RuvB-L)" evidence="1">
    <location>
        <begin position="1"/>
        <end position="168"/>
    </location>
</feature>
<feature type="region of interest" description="Small ATPAse domain (RuvB-S)" evidence="1">
    <location>
        <begin position="169"/>
        <end position="239"/>
    </location>
</feature>
<feature type="region of interest" description="Head domain (RuvB-H)" evidence="1">
    <location>
        <begin position="242"/>
        <end position="318"/>
    </location>
</feature>
<feature type="binding site" evidence="1">
    <location>
        <position position="7"/>
    </location>
    <ligand>
        <name>ATP</name>
        <dbReference type="ChEBI" id="CHEBI:30616"/>
    </ligand>
</feature>
<feature type="binding site" evidence="1">
    <location>
        <position position="8"/>
    </location>
    <ligand>
        <name>ATP</name>
        <dbReference type="ChEBI" id="CHEBI:30616"/>
    </ligand>
</feature>
<feature type="binding site" evidence="1">
    <location>
        <position position="49"/>
    </location>
    <ligand>
        <name>ATP</name>
        <dbReference type="ChEBI" id="CHEBI:30616"/>
    </ligand>
</feature>
<feature type="binding site" evidence="1">
    <location>
        <position position="52"/>
    </location>
    <ligand>
        <name>ATP</name>
        <dbReference type="ChEBI" id="CHEBI:30616"/>
    </ligand>
</feature>
<feature type="binding site" evidence="1">
    <location>
        <position position="53"/>
    </location>
    <ligand>
        <name>ATP</name>
        <dbReference type="ChEBI" id="CHEBI:30616"/>
    </ligand>
</feature>
<feature type="binding site" evidence="1">
    <location>
        <position position="53"/>
    </location>
    <ligand>
        <name>Mg(2+)</name>
        <dbReference type="ChEBI" id="CHEBI:18420"/>
    </ligand>
</feature>
<feature type="binding site" evidence="1">
    <location>
        <position position="54"/>
    </location>
    <ligand>
        <name>ATP</name>
        <dbReference type="ChEBI" id="CHEBI:30616"/>
    </ligand>
</feature>
<feature type="binding site" evidence="1">
    <location>
        <position position="158"/>
    </location>
    <ligand>
        <name>ATP</name>
        <dbReference type="ChEBI" id="CHEBI:30616"/>
    </ligand>
</feature>
<feature type="binding site" evidence="1">
    <location>
        <position position="168"/>
    </location>
    <ligand>
        <name>ATP</name>
        <dbReference type="ChEBI" id="CHEBI:30616"/>
    </ligand>
</feature>
<feature type="binding site" evidence="1">
    <location>
        <position position="205"/>
    </location>
    <ligand>
        <name>ATP</name>
        <dbReference type="ChEBI" id="CHEBI:30616"/>
    </ligand>
</feature>
<feature type="binding site" evidence="1">
    <location>
        <position position="278"/>
    </location>
    <ligand>
        <name>DNA</name>
        <dbReference type="ChEBI" id="CHEBI:16991"/>
    </ligand>
</feature>
<feature type="binding site" evidence="1">
    <location>
        <position position="297"/>
    </location>
    <ligand>
        <name>DNA</name>
        <dbReference type="ChEBI" id="CHEBI:16991"/>
    </ligand>
</feature>
<feature type="binding site" evidence="1">
    <location>
        <position position="302"/>
    </location>
    <ligand>
        <name>DNA</name>
        <dbReference type="ChEBI" id="CHEBI:16991"/>
    </ligand>
</feature>
<keyword id="KW-0067">ATP-binding</keyword>
<keyword id="KW-0963">Cytoplasm</keyword>
<keyword id="KW-0227">DNA damage</keyword>
<keyword id="KW-0233">DNA recombination</keyword>
<keyword id="KW-0234">DNA repair</keyword>
<keyword id="KW-0238">DNA-binding</keyword>
<keyword id="KW-0378">Hydrolase</keyword>
<keyword id="KW-0547">Nucleotide-binding</keyword>